<organism>
    <name type="scientific">Rattus norvegicus</name>
    <name type="common">Rat</name>
    <dbReference type="NCBI Taxonomy" id="10116"/>
    <lineage>
        <taxon>Eukaryota</taxon>
        <taxon>Metazoa</taxon>
        <taxon>Chordata</taxon>
        <taxon>Craniata</taxon>
        <taxon>Vertebrata</taxon>
        <taxon>Euteleostomi</taxon>
        <taxon>Mammalia</taxon>
        <taxon>Eutheria</taxon>
        <taxon>Euarchontoglires</taxon>
        <taxon>Glires</taxon>
        <taxon>Rodentia</taxon>
        <taxon>Myomorpha</taxon>
        <taxon>Muroidea</taxon>
        <taxon>Muridae</taxon>
        <taxon>Murinae</taxon>
        <taxon>Rattus</taxon>
    </lineage>
</organism>
<protein>
    <recommendedName>
        <fullName evidence="2">NADPH--cytochrome P450 reductase</fullName>
        <shortName evidence="2">CPR</shortName>
        <shortName evidence="2">P450R</shortName>
        <ecNumber evidence="2">1.6.2.4</ecNumber>
    </recommendedName>
</protein>
<feature type="initiator methionine" description="Removed" evidence="1">
    <location>
        <position position="1"/>
    </location>
</feature>
<feature type="chain" id="PRO_0000167600" description="NADPH--cytochrome P450 reductase">
    <location>
        <begin position="2"/>
        <end position="678"/>
    </location>
</feature>
<feature type="topological domain" description="Lumenal" evidence="2">
    <location>
        <begin position="2"/>
        <end position="22"/>
    </location>
</feature>
<feature type="transmembrane region" description="Helical" evidence="2">
    <location>
        <begin position="23"/>
        <end position="43"/>
    </location>
</feature>
<feature type="topological domain" description="Cytoplasmic" evidence="2">
    <location>
        <begin position="44"/>
        <end position="678"/>
    </location>
</feature>
<feature type="domain" description="Flavodoxin-like" evidence="2">
    <location>
        <begin position="80"/>
        <end position="224"/>
    </location>
</feature>
<feature type="domain" description="FAD-binding FR-type" evidence="2">
    <location>
        <begin position="279"/>
        <end position="521"/>
    </location>
</feature>
<feature type="binding site" evidence="2 3 4 5 6 7">
    <location>
        <begin position="86"/>
        <end position="91"/>
    </location>
    <ligand>
        <name>FMN</name>
        <dbReference type="ChEBI" id="CHEBI:58210"/>
    </ligand>
</feature>
<feature type="binding site" evidence="2 3 4 5 6 7">
    <location>
        <begin position="138"/>
        <end position="141"/>
    </location>
    <ligand>
        <name>FMN</name>
        <dbReference type="ChEBI" id="CHEBI:58210"/>
    </ligand>
</feature>
<feature type="binding site" evidence="2 3 4 5 6 7">
    <location>
        <begin position="173"/>
        <end position="182"/>
    </location>
    <ligand>
        <name>FMN</name>
        <dbReference type="ChEBI" id="CHEBI:58210"/>
    </ligand>
</feature>
<feature type="binding site" evidence="2 3 5 6">
    <location>
        <position position="208"/>
    </location>
    <ligand>
        <name>FMN</name>
        <dbReference type="ChEBI" id="CHEBI:58210"/>
    </ligand>
</feature>
<feature type="binding site" evidence="2 3 4 5 6">
    <location>
        <position position="298"/>
    </location>
    <ligand>
        <name>NADP(+)</name>
        <dbReference type="ChEBI" id="CHEBI:58349"/>
    </ligand>
</feature>
<feature type="binding site" evidence="2 3 4 5 7">
    <location>
        <position position="424"/>
    </location>
    <ligand>
        <name>FAD</name>
        <dbReference type="ChEBI" id="CHEBI:57692"/>
    </ligand>
</feature>
<feature type="binding site" evidence="2 3 4 5 6 7">
    <location>
        <begin position="454"/>
        <end position="457"/>
    </location>
    <ligand>
        <name>FAD</name>
        <dbReference type="ChEBI" id="CHEBI:57692"/>
    </ligand>
</feature>
<feature type="binding site" evidence="2 3 4 6 7">
    <location>
        <begin position="472"/>
        <end position="474"/>
    </location>
    <ligand>
        <name>FAD</name>
        <dbReference type="ChEBI" id="CHEBI:57692"/>
    </ligand>
</feature>
<feature type="binding site" evidence="2 3 4 5 6 7">
    <location>
        <position position="478"/>
    </location>
    <ligand>
        <name>FAD</name>
        <dbReference type="ChEBI" id="CHEBI:57692"/>
    </ligand>
</feature>
<feature type="binding site" evidence="2 3 4 5 6 7">
    <location>
        <begin position="488"/>
        <end position="491"/>
    </location>
    <ligand>
        <name>FAD</name>
        <dbReference type="ChEBI" id="CHEBI:57692"/>
    </ligand>
</feature>
<feature type="binding site" evidence="2 3 4 5 6 7">
    <location>
        <position position="535"/>
    </location>
    <ligand>
        <name>NADP(+)</name>
        <dbReference type="ChEBI" id="CHEBI:58349"/>
    </ligand>
</feature>
<feature type="binding site" evidence="2 3 4 5 6 7">
    <location>
        <begin position="596"/>
        <end position="597"/>
    </location>
    <ligand>
        <name>NADP(+)</name>
        <dbReference type="ChEBI" id="CHEBI:58349"/>
    </ligand>
</feature>
<feature type="binding site" evidence="2 3 4 5 6 7">
    <location>
        <begin position="602"/>
        <end position="606"/>
    </location>
    <ligand>
        <name>NADP(+)</name>
        <dbReference type="ChEBI" id="CHEBI:58349"/>
    </ligand>
</feature>
<feature type="binding site" evidence="2 3 4 5 6">
    <location>
        <position position="639"/>
    </location>
    <ligand>
        <name>NADP(+)</name>
        <dbReference type="ChEBI" id="CHEBI:58349"/>
    </ligand>
</feature>
<feature type="binding site" evidence="2 3 4 5 6 7">
    <location>
        <position position="677"/>
    </location>
    <ligand>
        <name>FAD</name>
        <dbReference type="ChEBI" id="CHEBI:57692"/>
    </ligand>
</feature>
<feature type="modified residue" description="N-acetylglycine" evidence="1">
    <location>
        <position position="2"/>
    </location>
</feature>
<feature type="sequence conflict" description="In Ref. 3; AAA41683." evidence="8" ref="3">
    <original>V</original>
    <variation>A</variation>
    <location>
        <position position="255"/>
    </location>
</feature>
<feature type="helix" evidence="9">
    <location>
        <begin position="69"/>
        <end position="76"/>
    </location>
</feature>
<feature type="strand" evidence="9">
    <location>
        <begin position="80"/>
        <end position="85"/>
    </location>
</feature>
<feature type="strand" evidence="9">
    <location>
        <begin position="87"/>
        <end position="89"/>
    </location>
</feature>
<feature type="helix" evidence="9">
    <location>
        <begin position="90"/>
        <end position="101"/>
    </location>
</feature>
<feature type="helix" evidence="9">
    <location>
        <begin position="102"/>
        <end position="105"/>
    </location>
</feature>
<feature type="strand" evidence="9">
    <location>
        <begin position="109"/>
        <end position="112"/>
    </location>
</feature>
<feature type="helix" evidence="9">
    <location>
        <begin position="114"/>
        <end position="116"/>
    </location>
</feature>
<feature type="helix" evidence="9">
    <location>
        <begin position="119"/>
        <end position="127"/>
    </location>
</feature>
<feature type="strand" evidence="9">
    <location>
        <begin position="132"/>
        <end position="140"/>
    </location>
</feature>
<feature type="turn" evidence="9">
    <location>
        <begin position="141"/>
        <end position="143"/>
    </location>
</feature>
<feature type="helix" evidence="9">
    <location>
        <begin position="147"/>
        <end position="149"/>
    </location>
</feature>
<feature type="helix" evidence="9">
    <location>
        <begin position="150"/>
        <end position="158"/>
    </location>
</feature>
<feature type="strand" evidence="9">
    <location>
        <begin position="167"/>
        <end position="174"/>
    </location>
</feature>
<feature type="strand" evidence="9">
    <location>
        <begin position="176"/>
        <end position="180"/>
    </location>
</feature>
<feature type="helix" evidence="9">
    <location>
        <begin position="183"/>
        <end position="194"/>
    </location>
</feature>
<feature type="strand" evidence="9">
    <location>
        <begin position="198"/>
        <end position="201"/>
    </location>
</feature>
<feature type="strand" evidence="9">
    <location>
        <begin position="204"/>
        <end position="207"/>
    </location>
</feature>
<feature type="turn" evidence="9">
    <location>
        <begin position="208"/>
        <end position="210"/>
    </location>
</feature>
<feature type="helix" evidence="9">
    <location>
        <begin position="212"/>
        <end position="231"/>
    </location>
</feature>
<feature type="strand" evidence="9">
    <location>
        <begin position="244"/>
        <end position="249"/>
    </location>
</feature>
<feature type="helix" evidence="9">
    <location>
        <begin position="255"/>
        <end position="257"/>
    </location>
</feature>
<feature type="strand" evidence="9">
    <location>
        <begin position="258"/>
        <end position="261"/>
    </location>
</feature>
<feature type="strand" evidence="9">
    <location>
        <begin position="263"/>
        <end position="265"/>
    </location>
</feature>
<feature type="turn" evidence="9">
    <location>
        <begin position="266"/>
        <end position="270"/>
    </location>
</feature>
<feature type="strand" evidence="11">
    <location>
        <begin position="277"/>
        <end position="280"/>
    </location>
</feature>
<feature type="strand" evidence="9">
    <location>
        <begin position="282"/>
        <end position="291"/>
    </location>
</feature>
<feature type="strand" evidence="9">
    <location>
        <begin position="294"/>
        <end position="298"/>
    </location>
</feature>
<feature type="strand" evidence="9">
    <location>
        <begin position="300"/>
        <end position="306"/>
    </location>
</feature>
<feature type="turn" evidence="12">
    <location>
        <begin position="308"/>
        <end position="311"/>
    </location>
</feature>
<feature type="strand" evidence="9">
    <location>
        <begin position="319"/>
        <end position="322"/>
    </location>
</feature>
<feature type="helix" evidence="9">
    <location>
        <begin position="328"/>
        <end position="337"/>
    </location>
</feature>
<feature type="strand" evidence="9">
    <location>
        <begin position="345"/>
        <end position="351"/>
    </location>
</feature>
<feature type="strand" evidence="9">
    <location>
        <begin position="360"/>
        <end position="366"/>
    </location>
</feature>
<feature type="helix" evidence="9">
    <location>
        <begin position="367"/>
        <end position="373"/>
    </location>
</feature>
<feature type="helix" evidence="9">
    <location>
        <begin position="383"/>
        <end position="389"/>
    </location>
</feature>
<feature type="helix" evidence="9">
    <location>
        <begin position="390"/>
        <end position="392"/>
    </location>
</feature>
<feature type="strand" evidence="10">
    <location>
        <begin position="393"/>
        <end position="395"/>
    </location>
</feature>
<feature type="helix" evidence="9">
    <location>
        <begin position="396"/>
        <end position="403"/>
    </location>
</feature>
<feature type="helix" evidence="9">
    <location>
        <begin position="404"/>
        <end position="406"/>
    </location>
</feature>
<feature type="strand" evidence="9">
    <location>
        <begin position="408"/>
        <end position="410"/>
    </location>
</feature>
<feature type="helix" evidence="9">
    <location>
        <begin position="411"/>
        <end position="419"/>
    </location>
</feature>
<feature type="turn" evidence="9">
    <location>
        <begin position="420"/>
        <end position="424"/>
    </location>
</feature>
<feature type="helix" evidence="9">
    <location>
        <begin position="427"/>
        <end position="433"/>
    </location>
</feature>
<feature type="helix" evidence="9">
    <location>
        <begin position="441"/>
        <end position="447"/>
    </location>
</feature>
<feature type="strand" evidence="9">
    <location>
        <begin position="454"/>
        <end position="457"/>
    </location>
</feature>
<feature type="turn" evidence="9">
    <location>
        <begin position="462"/>
        <end position="464"/>
    </location>
</feature>
<feature type="strand" evidence="9">
    <location>
        <begin position="468"/>
        <end position="474"/>
    </location>
</feature>
<feature type="strand" evidence="9">
    <location>
        <begin position="477"/>
        <end position="479"/>
    </location>
</feature>
<feature type="strand" evidence="9">
    <location>
        <begin position="483"/>
        <end position="487"/>
    </location>
</feature>
<feature type="helix" evidence="9">
    <location>
        <begin position="489"/>
        <end position="496"/>
    </location>
</feature>
<feature type="turn" evidence="13">
    <location>
        <begin position="502"/>
        <end position="504"/>
    </location>
</feature>
<feature type="strand" evidence="9">
    <location>
        <begin position="508"/>
        <end position="514"/>
    </location>
</feature>
<feature type="strand" evidence="9">
    <location>
        <begin position="528"/>
        <end position="531"/>
    </location>
</feature>
<feature type="helix" evidence="9">
    <location>
        <begin position="534"/>
        <end position="537"/>
    </location>
</feature>
<feature type="helix" evidence="9">
    <location>
        <begin position="538"/>
        <end position="552"/>
    </location>
</feature>
<feature type="strand" evidence="9">
    <location>
        <begin position="560"/>
        <end position="567"/>
    </location>
</feature>
<feature type="turn" evidence="9">
    <location>
        <begin position="569"/>
        <end position="571"/>
    </location>
</feature>
<feature type="helix" evidence="9">
    <location>
        <begin position="576"/>
        <end position="584"/>
    </location>
</feature>
<feature type="strand" evidence="9">
    <location>
        <begin position="587"/>
        <end position="595"/>
    </location>
</feature>
<feature type="strand" evidence="9">
    <location>
        <begin position="598"/>
        <end position="601"/>
    </location>
</feature>
<feature type="helix" evidence="9">
    <location>
        <begin position="605"/>
        <end position="611"/>
    </location>
</feature>
<feature type="helix" evidence="9">
    <location>
        <begin position="613"/>
        <end position="621"/>
    </location>
</feature>
<feature type="strand" evidence="9">
    <location>
        <begin position="626"/>
        <end position="632"/>
    </location>
</feature>
<feature type="turn" evidence="9">
    <location>
        <begin position="633"/>
        <end position="635"/>
    </location>
</feature>
<feature type="helix" evidence="9">
    <location>
        <begin position="636"/>
        <end position="651"/>
    </location>
</feature>
<feature type="helix" evidence="9">
    <location>
        <begin position="656"/>
        <end position="668"/>
    </location>
</feature>
<feature type="strand" evidence="9">
    <location>
        <begin position="671"/>
        <end position="677"/>
    </location>
</feature>
<sequence length="678" mass="76963">MGDSHEDTSATMPEAVAEEVSLFSTTDMVLFSLIVGVLTYWFIFRKKKEEIPEFSKIQTTAPPVKESSFVEKMKKTGRNIIVFYGSQTGTAEEFANRLSKDAHRYGMRGMSADPEEYDLADLSSLPEIDKSLVVFCMATYGEGDPTDNAQDFYDWLQETDVDLTGVKFAVFGLGNKTYEHFNAMGKYVDQRLEQLGAQRIFELGLGDDDGNLEEDFITWREQFWPAVCEFFGVEATGEESSIRQYELVVHEDMDVAKVYTGEMGRLKSYENQKPPFDAKNPFLAAVTANRKLNQGTERHLMHLELDISDSKIRYESGDHVAVYPANDSALVNQIGEILGADLDVIMSLNNLDEESNKKHPFPCPTTYRTALTYYLDITNPPRTNVLYELAQYASEPSEQEHLHKMASSSGEGKELYLSWVVEARRHILAILQDYPSLRPPIDHLCELLPRLQARYYSIASSSKVHPNSVHICAVAVEYEAKSGRVNKGVATSWLRAKEPAGENGGRALVPMFVRKSQFRLPFKSTTPVIMVGPGTGIAPFMGFIQERAWLREQGKEVGETLLYYGCRRSDEDYLYREELARFHKDGALTQLNVAFSREQAHKVYVQHLLKRDREHLWKLIHEGGAHIYVCGDARNMAKDVQNTFYDIVAEFGPMEHTQAVDYVKKLMTKGRYSLDVWS</sequence>
<reference key="1">
    <citation type="journal article" date="1985" name="Proc. Natl. Acad. Sci. U.S.A.">
        <title>Coding nucleotide sequence of rat NADPH-cytochrome P-450 oxidoreductase cDNA and identification of flavin-binding domains.</title>
        <authorList>
            <person name="Porter T.D."/>
            <person name="Kasper C.B."/>
        </authorList>
    </citation>
    <scope>NUCLEOTIDE SEQUENCE [MRNA]</scope>
</reference>
<reference key="2">
    <citation type="journal article" date="1986" name="DNA">
        <title>Expression of rat NADPH-cytochrome P-450 reductase cDNA in Saccharomyces cerevisiae.</title>
        <authorList>
            <person name="Murakami H."/>
            <person name="Yabusaki Y."/>
            <person name="Ohkawa H."/>
        </authorList>
    </citation>
    <scope>NUCLEOTIDE SEQUENCE [MRNA]</scope>
</reference>
<reference key="3">
    <citation type="journal article" date="1990" name="Biochemistry">
        <title>NADPH-cytochrome P-450 oxidoreductase gene organization correlates with structural domains of the protein.</title>
        <authorList>
            <person name="Porter T.D."/>
            <person name="Beck T.W."/>
            <person name="Kasper C.B."/>
        </authorList>
    </citation>
    <scope>NUCLEOTIDE SEQUENCE [GENOMIC DNA]</scope>
    <source>
        <strain>Wistar</strain>
        <tissue>Liver</tissue>
    </source>
</reference>
<reference key="4">
    <citation type="journal article" date="1997" name="Proc. Natl. Acad. Sci. U.S.A.">
        <title>Three-dimensional structure of NADPH-cytochrome P450 reductase: prototype for FMN- and FAD-containing enzymes.</title>
        <authorList>
            <person name="Wang M."/>
            <person name="Roberts D.L."/>
            <person name="Paschke R."/>
            <person name="Shea T.M."/>
            <person name="Masters B.S.S."/>
            <person name="Kim J.-J.P."/>
        </authorList>
    </citation>
    <scope>X-RAY CRYSTALLOGRAPHY (2.6 ANGSTROMS) OF 64-678 IN COMPLEX WITH FAD; FMN AND NADP</scope>
</reference>
<reference key="5">
    <citation type="journal article" date="2001" name="J. Biol. Chem.">
        <title>NADPH-cytochrome P450 oxidoreductase. Structural basis for hydride and electron transfer.</title>
        <authorList>
            <person name="Hubbard P.A."/>
            <person name="Shen A.L."/>
            <person name="Paschke R."/>
            <person name="Kasper C.B."/>
            <person name="Kim J.-J.P."/>
        </authorList>
    </citation>
    <scope>X-RAY CRYSTALLOGRAPHY (1.8 ANGSTROMS) OF 57-678 IN COMPLEX WITH FAD; FMN AND NADP</scope>
</reference>
<reference key="6">
    <citation type="journal article" date="2009" name="J. Biol. Chem.">
        <title>Structure and function of an NADPH-cytochrome P450 oxidoreductase in an open conformation capable of reducing cytochrome P450.</title>
        <authorList>
            <person name="Hamdane D."/>
            <person name="Xia C."/>
            <person name="Im S.C."/>
            <person name="Zhang H."/>
            <person name="Kim J.J."/>
            <person name="Waskell L."/>
        </authorList>
    </citation>
    <scope>X-RAY CRYSTALLOGRAPHY (3.40 ANGSTROMS) OF 57-678 IN COMPLEX WITH FAD; FMN AND NADP</scope>
</reference>
<reference key="7">
    <citation type="journal article" date="2011" name="J. Biol. Chem.">
        <title>Conformational changes of NADPH-cytochrome P450 oxidoreductase are essential for catalysis and cofactor binding.</title>
        <authorList>
            <person name="Xia C."/>
            <person name="Hamdane D."/>
            <person name="Shen A.L."/>
            <person name="Choi V."/>
            <person name="Kasper C.B."/>
            <person name="Pearl N.M."/>
            <person name="Zhang H."/>
            <person name="Im S.C."/>
            <person name="Waskell L."/>
            <person name="Kim J.J."/>
        </authorList>
    </citation>
    <scope>X-RAY CRYSTALLOGRAPHY (2.20 ANGSTROMS) OF 57-678</scope>
</reference>
<reference key="8">
    <citation type="submission" date="2013-10" db="PDB data bank">
        <title>Structural basis for the electron transfer from an open form of NADPH-cytochrome P450 oxidoreductase to heme oxygenase.</title>
        <authorList>
            <person name="Sugishima M."/>
            <person name="Sato H."/>
            <person name="Higashimoto Y."/>
            <person name="Harada J."/>
            <person name="Wada K."/>
            <person name="Fukuyama K."/>
            <person name="Noguchi M."/>
        </authorList>
    </citation>
    <scope>X-RAY CRYSTALLOGRAPHY (4.30 ANGSTROMS) OF 58-678 IN COMPLEX WITH FAD; FMN AND NADP</scope>
</reference>
<evidence type="ECO:0000250" key="1">
    <source>
        <dbReference type="UniProtKB" id="P16435"/>
    </source>
</evidence>
<evidence type="ECO:0000255" key="2">
    <source>
        <dbReference type="HAMAP-Rule" id="MF_03212"/>
    </source>
</evidence>
<evidence type="ECO:0000269" key="3">
    <source>
    </source>
</evidence>
<evidence type="ECO:0000269" key="4">
    <source>
    </source>
</evidence>
<evidence type="ECO:0000269" key="5">
    <source>
    </source>
</evidence>
<evidence type="ECO:0000269" key="6">
    <source>
    </source>
</evidence>
<evidence type="ECO:0000269" key="7">
    <source ref="8"/>
</evidence>
<evidence type="ECO:0000305" key="8"/>
<evidence type="ECO:0007829" key="9">
    <source>
        <dbReference type="PDB" id="1JA1"/>
    </source>
</evidence>
<evidence type="ECO:0007829" key="10">
    <source>
        <dbReference type="PDB" id="3OJX"/>
    </source>
</evidence>
<evidence type="ECO:0007829" key="11">
    <source>
        <dbReference type="PDB" id="5URD"/>
    </source>
</evidence>
<evidence type="ECO:0007829" key="12">
    <source>
        <dbReference type="PDB" id="5URG"/>
    </source>
</evidence>
<evidence type="ECO:0007829" key="13">
    <source>
        <dbReference type="PDB" id="9EF0"/>
    </source>
</evidence>
<gene>
    <name evidence="2" type="primary">Por</name>
</gene>
<accession>P00388</accession>
<comment type="function">
    <text evidence="2">This enzyme is required for electron transfer from NADP to cytochrome P450 in microsomes. It can also provide electron transfer to heme oxygenase and cytochrome B5.</text>
</comment>
<comment type="catalytic activity">
    <reaction evidence="2">
        <text>2 oxidized [cytochrome P450] + NADPH = 2 reduced [cytochrome P450] + NADP(+) + H(+)</text>
        <dbReference type="Rhea" id="RHEA:24040"/>
        <dbReference type="Rhea" id="RHEA-COMP:14627"/>
        <dbReference type="Rhea" id="RHEA-COMP:14628"/>
        <dbReference type="ChEBI" id="CHEBI:15378"/>
        <dbReference type="ChEBI" id="CHEBI:55376"/>
        <dbReference type="ChEBI" id="CHEBI:57783"/>
        <dbReference type="ChEBI" id="CHEBI:58349"/>
        <dbReference type="ChEBI" id="CHEBI:60344"/>
        <dbReference type="EC" id="1.6.2.4"/>
    </reaction>
</comment>
<comment type="cofactor">
    <cofactor evidence="2 6">
        <name>FAD</name>
        <dbReference type="ChEBI" id="CHEBI:57692"/>
    </cofactor>
    <text evidence="2 6">Binds 1 FAD per monomer.</text>
</comment>
<comment type="cofactor">
    <cofactor evidence="2 6">
        <name>FMN</name>
        <dbReference type="ChEBI" id="CHEBI:58210"/>
    </cofactor>
    <text evidence="2 6">Binds 1 FMN per monomer.</text>
</comment>
<comment type="subcellular location">
    <subcellularLocation>
        <location evidence="2">Endoplasmic reticulum membrane</location>
        <topology evidence="2">Single-pass membrane protein</topology>
        <orientation evidence="2">Cytoplasmic side</orientation>
    </subcellularLocation>
</comment>
<comment type="similarity">
    <text evidence="2">Belongs to the NADPH--cytochrome P450 reductase family.</text>
</comment>
<comment type="similarity">
    <text evidence="2">In the N-terminal section; belongs to the flavodoxin family.</text>
</comment>
<comment type="similarity">
    <text evidence="2">In the C-terminal section; belongs to the flavoprotein pyridine nucleotide cytochrome reductase family.</text>
</comment>
<dbReference type="EC" id="1.6.2.4" evidence="2"/>
<dbReference type="EMBL" id="M10068">
    <property type="protein sequence ID" value="AAA41064.1"/>
    <property type="molecule type" value="mRNA"/>
</dbReference>
<dbReference type="EMBL" id="M12516">
    <property type="protein sequence ID" value="AAA41067.1"/>
    <property type="molecule type" value="mRNA"/>
</dbReference>
<dbReference type="EMBL" id="M58937">
    <property type="protein sequence ID" value="AAA41683.1"/>
    <property type="molecule type" value="Genomic_DNA"/>
</dbReference>
<dbReference type="EMBL" id="M58932">
    <property type="protein sequence ID" value="AAA41683.1"/>
    <property type="status" value="JOINED"/>
    <property type="molecule type" value="Genomic_DNA"/>
</dbReference>
<dbReference type="EMBL" id="M58933">
    <property type="protein sequence ID" value="AAA41683.1"/>
    <property type="status" value="JOINED"/>
    <property type="molecule type" value="Genomic_DNA"/>
</dbReference>
<dbReference type="EMBL" id="M58934">
    <property type="protein sequence ID" value="AAA41683.1"/>
    <property type="status" value="JOINED"/>
    <property type="molecule type" value="Genomic_DNA"/>
</dbReference>
<dbReference type="EMBL" id="M58935">
    <property type="protein sequence ID" value="AAA41683.1"/>
    <property type="status" value="JOINED"/>
    <property type="molecule type" value="Genomic_DNA"/>
</dbReference>
<dbReference type="EMBL" id="M58936">
    <property type="protein sequence ID" value="AAA41683.1"/>
    <property type="status" value="JOINED"/>
    <property type="molecule type" value="Genomic_DNA"/>
</dbReference>
<dbReference type="PIR" id="A36073">
    <property type="entry name" value="RDRTO4"/>
</dbReference>
<dbReference type="RefSeq" id="NP_113764.1">
    <property type="nucleotide sequence ID" value="NM_031576.2"/>
</dbReference>
<dbReference type="RefSeq" id="XP_063127299.1">
    <property type="nucleotide sequence ID" value="XM_063271229.1"/>
</dbReference>
<dbReference type="RefSeq" id="XP_063127300.1">
    <property type="nucleotide sequence ID" value="XM_063271230.1"/>
</dbReference>
<dbReference type="PDB" id="1AMO">
    <property type="method" value="X-ray"/>
    <property type="resolution" value="2.60 A"/>
    <property type="chains" value="A/B=64-678"/>
</dbReference>
<dbReference type="PDB" id="1J9Z">
    <property type="method" value="X-ray"/>
    <property type="resolution" value="2.70 A"/>
    <property type="chains" value="A/B=57-676"/>
</dbReference>
<dbReference type="PDB" id="1JA0">
    <property type="method" value="X-ray"/>
    <property type="resolution" value="2.60 A"/>
    <property type="chains" value="A/B=57-676"/>
</dbReference>
<dbReference type="PDB" id="1JA1">
    <property type="method" value="X-ray"/>
    <property type="resolution" value="1.80 A"/>
    <property type="chains" value="A/B=57-678"/>
</dbReference>
<dbReference type="PDB" id="3ES9">
    <property type="method" value="X-ray"/>
    <property type="resolution" value="3.40 A"/>
    <property type="chains" value="A/B/C=57-678"/>
</dbReference>
<dbReference type="PDB" id="3OJW">
    <property type="method" value="X-ray"/>
    <property type="resolution" value="2.20 A"/>
    <property type="chains" value="A=57-678"/>
</dbReference>
<dbReference type="PDB" id="3OJX">
    <property type="method" value="X-ray"/>
    <property type="resolution" value="2.50 A"/>
    <property type="chains" value="A=57-678"/>
</dbReference>
<dbReference type="PDB" id="3WKT">
    <property type="method" value="X-ray"/>
    <property type="resolution" value="4.30 A"/>
    <property type="chains" value="A/B=58-678"/>
</dbReference>
<dbReference type="PDB" id="4Y7C">
    <property type="method" value="X-ray"/>
    <property type="resolution" value="2.20 A"/>
    <property type="chains" value="A/B=57-678"/>
</dbReference>
<dbReference type="PDB" id="4Y9R">
    <property type="method" value="X-ray"/>
    <property type="resolution" value="2.40 A"/>
    <property type="chains" value="A/B=57-678"/>
</dbReference>
<dbReference type="PDB" id="4Y9U">
    <property type="method" value="X-ray"/>
    <property type="resolution" value="1.95 A"/>
    <property type="chains" value="A/B=57-678"/>
</dbReference>
<dbReference type="PDB" id="4YAF">
    <property type="method" value="X-ray"/>
    <property type="resolution" value="1.91 A"/>
    <property type="chains" value="A/B=57-678"/>
</dbReference>
<dbReference type="PDB" id="4YAL">
    <property type="method" value="X-ray"/>
    <property type="resolution" value="1.88 A"/>
    <property type="chains" value="A/B=57-678"/>
</dbReference>
<dbReference type="PDB" id="4YAO">
    <property type="method" value="X-ray"/>
    <property type="resolution" value="2.50 A"/>
    <property type="chains" value="A/B=57-678"/>
</dbReference>
<dbReference type="PDB" id="4YAU">
    <property type="method" value="X-ray"/>
    <property type="resolution" value="2.20 A"/>
    <property type="chains" value="A/B=57-678"/>
</dbReference>
<dbReference type="PDB" id="4YAW">
    <property type="method" value="X-ray"/>
    <property type="resolution" value="2.00 A"/>
    <property type="chains" value="A/B=57-678"/>
</dbReference>
<dbReference type="PDB" id="5URD">
    <property type="method" value="X-ray"/>
    <property type="resolution" value="1.90 A"/>
    <property type="chains" value="A/B=57-678"/>
</dbReference>
<dbReference type="PDB" id="5URE">
    <property type="method" value="X-ray"/>
    <property type="resolution" value="2.30 A"/>
    <property type="chains" value="A/B=57-678"/>
</dbReference>
<dbReference type="PDB" id="5URG">
    <property type="method" value="X-ray"/>
    <property type="resolution" value="2.30 A"/>
    <property type="chains" value="A/B=57-678"/>
</dbReference>
<dbReference type="PDB" id="5URH">
    <property type="method" value="X-ray"/>
    <property type="resolution" value="2.50 A"/>
    <property type="chains" value="A/B=57-678"/>
</dbReference>
<dbReference type="PDB" id="5URI">
    <property type="method" value="X-ray"/>
    <property type="resolution" value="2.70 A"/>
    <property type="chains" value="A/B=57-678"/>
</dbReference>
<dbReference type="PDB" id="6J79">
    <property type="method" value="X-ray"/>
    <property type="resolution" value="3.33 A"/>
    <property type="chains" value="A/B=59-678"/>
</dbReference>
<dbReference type="PDB" id="6J7A">
    <property type="method" value="X-ray"/>
    <property type="resolution" value="3.27 A"/>
    <property type="chains" value="A/B=59-678"/>
</dbReference>
<dbReference type="PDB" id="6J7I">
    <property type="method" value="X-ray"/>
    <property type="resolution" value="3.30 A"/>
    <property type="chains" value="A/B=59-678"/>
</dbReference>
<dbReference type="PDB" id="6NJR">
    <property type="method" value="X-ray"/>
    <property type="resolution" value="2.70 A"/>
    <property type="chains" value="A/B=57-678"/>
</dbReference>
<dbReference type="PDB" id="7L18">
    <property type="method" value="X-ray"/>
    <property type="resolution" value="2.54 A"/>
    <property type="chains" value="AAA/BBB=57-678"/>
</dbReference>
<dbReference type="PDB" id="9EF0">
    <property type="method" value="EM"/>
    <property type="resolution" value="3.33 A"/>
    <property type="chains" value="A=1-678"/>
</dbReference>
<dbReference type="PDBsum" id="1AMO"/>
<dbReference type="PDBsum" id="1J9Z"/>
<dbReference type="PDBsum" id="1JA0"/>
<dbReference type="PDBsum" id="1JA1"/>
<dbReference type="PDBsum" id="3ES9"/>
<dbReference type="PDBsum" id="3OJW"/>
<dbReference type="PDBsum" id="3OJX"/>
<dbReference type="PDBsum" id="3WKT"/>
<dbReference type="PDBsum" id="4Y7C"/>
<dbReference type="PDBsum" id="4Y9R"/>
<dbReference type="PDBsum" id="4Y9U"/>
<dbReference type="PDBsum" id="4YAF"/>
<dbReference type="PDBsum" id="4YAL"/>
<dbReference type="PDBsum" id="4YAO"/>
<dbReference type="PDBsum" id="4YAU"/>
<dbReference type="PDBsum" id="4YAW"/>
<dbReference type="PDBsum" id="5URD"/>
<dbReference type="PDBsum" id="5URE"/>
<dbReference type="PDBsum" id="5URG"/>
<dbReference type="PDBsum" id="5URH"/>
<dbReference type="PDBsum" id="5URI"/>
<dbReference type="PDBsum" id="6J79"/>
<dbReference type="PDBsum" id="6J7A"/>
<dbReference type="PDBsum" id="6J7I"/>
<dbReference type="PDBsum" id="6NJR"/>
<dbReference type="PDBsum" id="7L18"/>
<dbReference type="PDBsum" id="9EF0"/>
<dbReference type="SMR" id="P00388"/>
<dbReference type="BioGRID" id="248088">
    <property type="interactions" value="1"/>
</dbReference>
<dbReference type="FunCoup" id="P00388">
    <property type="interactions" value="2927"/>
</dbReference>
<dbReference type="IntAct" id="P00388">
    <property type="interactions" value="1"/>
</dbReference>
<dbReference type="STRING" id="10116.ENSRNOP00000001961"/>
<dbReference type="ChEMBL" id="CHEMBL2817"/>
<dbReference type="iPTMnet" id="P00388"/>
<dbReference type="PhosphoSitePlus" id="P00388"/>
<dbReference type="SwissPalm" id="P00388"/>
<dbReference type="jPOST" id="P00388"/>
<dbReference type="PaxDb" id="10116-ENSRNOP00000001961"/>
<dbReference type="Ensembl" id="ENSRNOT00000101964.1">
    <property type="protein sequence ID" value="ENSRNOP00000078537.1"/>
    <property type="gene ID" value="ENSRNOG00000001442.4"/>
</dbReference>
<dbReference type="GeneID" id="29441"/>
<dbReference type="KEGG" id="rno:29441"/>
<dbReference type="UCSC" id="RGD:68335">
    <property type="organism name" value="rat"/>
</dbReference>
<dbReference type="AGR" id="RGD:68335"/>
<dbReference type="CTD" id="5447"/>
<dbReference type="RGD" id="68335">
    <property type="gene designation" value="Por"/>
</dbReference>
<dbReference type="eggNOG" id="KOG1158">
    <property type="taxonomic scope" value="Eukaryota"/>
</dbReference>
<dbReference type="GeneTree" id="ENSGT00940000156847"/>
<dbReference type="HOGENOM" id="CLU_001570_17_3_1"/>
<dbReference type="InParanoid" id="P00388"/>
<dbReference type="OrthoDB" id="15231at9989"/>
<dbReference type="PhylomeDB" id="P00388"/>
<dbReference type="TreeFam" id="TF105719"/>
<dbReference type="BioCyc" id="MetaCyc:MONOMER-14290"/>
<dbReference type="BRENDA" id="1.6.2.4">
    <property type="organism ID" value="5301"/>
</dbReference>
<dbReference type="SABIO-RK" id="P00388"/>
<dbReference type="EvolutionaryTrace" id="P00388"/>
<dbReference type="PRO" id="PR:P00388"/>
<dbReference type="Proteomes" id="UP000002494">
    <property type="component" value="Chromosome 12"/>
</dbReference>
<dbReference type="Bgee" id="ENSRNOG00000001442">
    <property type="expression patterns" value="Expressed in lung and 19 other cell types or tissues"/>
</dbReference>
<dbReference type="GO" id="GO:0005829">
    <property type="term" value="C:cytosol"/>
    <property type="evidence" value="ECO:0000318"/>
    <property type="project" value="GO_Central"/>
</dbReference>
<dbReference type="GO" id="GO:0005789">
    <property type="term" value="C:endoplasmic reticulum membrane"/>
    <property type="evidence" value="ECO:0007669"/>
    <property type="project" value="UniProtKB-SubCell"/>
</dbReference>
<dbReference type="GO" id="GO:0043231">
    <property type="term" value="C:intracellular membrane-bounded organelle"/>
    <property type="evidence" value="ECO:0000266"/>
    <property type="project" value="RGD"/>
</dbReference>
<dbReference type="GO" id="GO:0004128">
    <property type="term" value="F:cytochrome-b5 reductase activity, acting on NAD(P)H"/>
    <property type="evidence" value="ECO:0000314"/>
    <property type="project" value="RGD"/>
</dbReference>
<dbReference type="GO" id="GO:0009055">
    <property type="term" value="F:electron transfer activity"/>
    <property type="evidence" value="ECO:0000314"/>
    <property type="project" value="RGD"/>
</dbReference>
<dbReference type="GO" id="GO:0019899">
    <property type="term" value="F:enzyme binding"/>
    <property type="evidence" value="ECO:0000314"/>
    <property type="project" value="RGD"/>
</dbReference>
<dbReference type="GO" id="GO:0050660">
    <property type="term" value="F:flavin adenine dinucleotide binding"/>
    <property type="evidence" value="ECO:0000315"/>
    <property type="project" value="RGD"/>
</dbReference>
<dbReference type="GO" id="GO:0010181">
    <property type="term" value="F:FMN binding"/>
    <property type="evidence" value="ECO:0000315"/>
    <property type="project" value="RGD"/>
</dbReference>
<dbReference type="GO" id="GO:0016787">
    <property type="term" value="F:hydrolase activity"/>
    <property type="evidence" value="ECO:0000314"/>
    <property type="project" value="RGD"/>
</dbReference>
<dbReference type="GO" id="GO:0047726">
    <property type="term" value="F:iron-cytochrome-c reductase activity"/>
    <property type="evidence" value="ECO:0000314"/>
    <property type="project" value="RGD"/>
</dbReference>
<dbReference type="GO" id="GO:0050661">
    <property type="term" value="F:NADP binding"/>
    <property type="evidence" value="ECO:0000314"/>
    <property type="project" value="RGD"/>
</dbReference>
<dbReference type="GO" id="GO:0003958">
    <property type="term" value="F:NADPH-hemoprotein reductase activity"/>
    <property type="evidence" value="ECO:0000314"/>
    <property type="project" value="BHF-UCL"/>
</dbReference>
<dbReference type="GO" id="GO:0008941">
    <property type="term" value="F:nitric oxide dioxygenase NAD(P)H activity"/>
    <property type="evidence" value="ECO:0000314"/>
    <property type="project" value="RGD"/>
</dbReference>
<dbReference type="GO" id="GO:0016491">
    <property type="term" value="F:oxidoreductase activity"/>
    <property type="evidence" value="ECO:0000266"/>
    <property type="project" value="RGD"/>
</dbReference>
<dbReference type="GO" id="GO:0009437">
    <property type="term" value="P:carnitine metabolic process"/>
    <property type="evidence" value="ECO:0000270"/>
    <property type="project" value="RGD"/>
</dbReference>
<dbReference type="GO" id="GO:0071372">
    <property type="term" value="P:cellular response to follicle-stimulating hormone stimulus"/>
    <property type="evidence" value="ECO:0000270"/>
    <property type="project" value="RGD"/>
</dbReference>
<dbReference type="GO" id="GO:0071371">
    <property type="term" value="P:cellular response to gonadotropin stimulus"/>
    <property type="evidence" value="ECO:0000270"/>
    <property type="project" value="RGD"/>
</dbReference>
<dbReference type="GO" id="GO:0071375">
    <property type="term" value="P:cellular response to peptide hormone stimulus"/>
    <property type="evidence" value="ECO:0000270"/>
    <property type="project" value="RGD"/>
</dbReference>
<dbReference type="GO" id="GO:0070988">
    <property type="term" value="P:demethylation"/>
    <property type="evidence" value="ECO:0000314"/>
    <property type="project" value="RGD"/>
</dbReference>
<dbReference type="GO" id="GO:0022900">
    <property type="term" value="P:electron transport chain"/>
    <property type="evidence" value="ECO:0000266"/>
    <property type="project" value="RGD"/>
</dbReference>
<dbReference type="GO" id="GO:0019395">
    <property type="term" value="P:fatty acid oxidation"/>
    <property type="evidence" value="ECO:0000314"/>
    <property type="project" value="RGD"/>
</dbReference>
<dbReference type="GO" id="GO:0009812">
    <property type="term" value="P:flavonoid metabolic process"/>
    <property type="evidence" value="ECO:0000270"/>
    <property type="project" value="RGD"/>
</dbReference>
<dbReference type="GO" id="GO:0043066">
    <property type="term" value="P:negative regulation of apoptotic process"/>
    <property type="evidence" value="ECO:0000315"/>
    <property type="project" value="RGD"/>
</dbReference>
<dbReference type="GO" id="GO:0043602">
    <property type="term" value="P:nitrate catabolic process"/>
    <property type="evidence" value="ECO:0000314"/>
    <property type="project" value="RGD"/>
</dbReference>
<dbReference type="GO" id="GO:0006809">
    <property type="term" value="P:nitric oxide biosynthetic process"/>
    <property type="evidence" value="ECO:0000318"/>
    <property type="project" value="GO_Central"/>
</dbReference>
<dbReference type="GO" id="GO:0046210">
    <property type="term" value="P:nitric oxide catabolic process"/>
    <property type="evidence" value="ECO:0000314"/>
    <property type="project" value="RGD"/>
</dbReference>
<dbReference type="GO" id="GO:0090346">
    <property type="term" value="P:organofluorine metabolic process"/>
    <property type="evidence" value="ECO:0000266"/>
    <property type="project" value="RGD"/>
</dbReference>
<dbReference type="GO" id="GO:0032332">
    <property type="term" value="P:positive regulation of chondrocyte differentiation"/>
    <property type="evidence" value="ECO:0000315"/>
    <property type="project" value="RGD"/>
</dbReference>
<dbReference type="GO" id="GO:0061913">
    <property type="term" value="P:positive regulation of growth plate cartilage chondrocyte proliferation"/>
    <property type="evidence" value="ECO:0000315"/>
    <property type="project" value="RGD"/>
</dbReference>
<dbReference type="GO" id="GO:0045880">
    <property type="term" value="P:positive regulation of smoothened signaling pathway"/>
    <property type="evidence" value="ECO:0000315"/>
    <property type="project" value="RGD"/>
</dbReference>
<dbReference type="GO" id="GO:0090031">
    <property type="term" value="P:positive regulation of steroid hormone biosynthetic process"/>
    <property type="evidence" value="ECO:0000314"/>
    <property type="project" value="RGD"/>
</dbReference>
<dbReference type="GO" id="GO:0071548">
    <property type="term" value="P:response to dexamethasone"/>
    <property type="evidence" value="ECO:0000314"/>
    <property type="project" value="RGD"/>
</dbReference>
<dbReference type="GO" id="GO:0009725">
    <property type="term" value="P:response to hormone"/>
    <property type="evidence" value="ECO:0000318"/>
    <property type="project" value="GO_Central"/>
</dbReference>
<dbReference type="GO" id="GO:0007584">
    <property type="term" value="P:response to nutrient"/>
    <property type="evidence" value="ECO:0000270"/>
    <property type="project" value="RGD"/>
</dbReference>
<dbReference type="GO" id="GO:0009410">
    <property type="term" value="P:response to xenobiotic stimulus"/>
    <property type="evidence" value="ECO:0000270"/>
    <property type="project" value="RGD"/>
</dbReference>
<dbReference type="CDD" id="cd06204">
    <property type="entry name" value="CYPOR"/>
    <property type="match status" value="1"/>
</dbReference>
<dbReference type="FunFam" id="1.20.990.10:FF:000001">
    <property type="entry name" value="NADPH--cytochrome P450 reductase"/>
    <property type="match status" value="1"/>
</dbReference>
<dbReference type="FunFam" id="3.40.50.360:FF:000009">
    <property type="entry name" value="NADPH--cytochrome P450 reductase"/>
    <property type="match status" value="1"/>
</dbReference>
<dbReference type="FunFam" id="3.40.50.80:FF:000001">
    <property type="entry name" value="NADPH--cytochrome P450 reductase 1"/>
    <property type="match status" value="1"/>
</dbReference>
<dbReference type="Gene3D" id="3.40.50.360">
    <property type="match status" value="1"/>
</dbReference>
<dbReference type="Gene3D" id="1.20.990.10">
    <property type="entry name" value="NADPH-cytochrome p450 Reductase, Chain A, domain 3"/>
    <property type="match status" value="1"/>
</dbReference>
<dbReference type="Gene3D" id="3.40.50.80">
    <property type="entry name" value="Nucleotide-binding domain of ferredoxin-NADP reductase (FNR) module"/>
    <property type="match status" value="1"/>
</dbReference>
<dbReference type="Gene3D" id="2.40.30.10">
    <property type="entry name" value="Translation factors"/>
    <property type="match status" value="1"/>
</dbReference>
<dbReference type="HAMAP" id="MF_03212">
    <property type="entry name" value="NCPR"/>
    <property type="match status" value="1"/>
</dbReference>
<dbReference type="InterPro" id="IPR003097">
    <property type="entry name" value="CysJ-like_FAD-binding"/>
</dbReference>
<dbReference type="InterPro" id="IPR017927">
    <property type="entry name" value="FAD-bd_FR_type"/>
</dbReference>
<dbReference type="InterPro" id="IPR001094">
    <property type="entry name" value="Flavdoxin-like"/>
</dbReference>
<dbReference type="InterPro" id="IPR008254">
    <property type="entry name" value="Flavodoxin/NO_synth"/>
</dbReference>
<dbReference type="InterPro" id="IPR001709">
    <property type="entry name" value="Flavoprot_Pyr_Nucl_cyt_Rdtase"/>
</dbReference>
<dbReference type="InterPro" id="IPR029039">
    <property type="entry name" value="Flavoprotein-like_sf"/>
</dbReference>
<dbReference type="InterPro" id="IPR039261">
    <property type="entry name" value="FNR_nucleotide-bd"/>
</dbReference>
<dbReference type="InterPro" id="IPR023173">
    <property type="entry name" value="NADPH_Cyt_P450_Rdtase_alpha"/>
</dbReference>
<dbReference type="InterPro" id="IPR001433">
    <property type="entry name" value="OxRdtase_FAD/NAD-bd"/>
</dbReference>
<dbReference type="InterPro" id="IPR023208">
    <property type="entry name" value="P450R"/>
</dbReference>
<dbReference type="InterPro" id="IPR017938">
    <property type="entry name" value="Riboflavin_synthase-like_b-brl"/>
</dbReference>
<dbReference type="PANTHER" id="PTHR19384:SF17">
    <property type="entry name" value="NADPH--CYTOCHROME P450 REDUCTASE"/>
    <property type="match status" value="1"/>
</dbReference>
<dbReference type="PANTHER" id="PTHR19384">
    <property type="entry name" value="NITRIC OXIDE SYNTHASE-RELATED"/>
    <property type="match status" value="1"/>
</dbReference>
<dbReference type="Pfam" id="PF00667">
    <property type="entry name" value="FAD_binding_1"/>
    <property type="match status" value="1"/>
</dbReference>
<dbReference type="Pfam" id="PF00258">
    <property type="entry name" value="Flavodoxin_1"/>
    <property type="match status" value="1"/>
</dbReference>
<dbReference type="Pfam" id="PF00175">
    <property type="entry name" value="NAD_binding_1"/>
    <property type="match status" value="1"/>
</dbReference>
<dbReference type="PIRSF" id="PIRSF000208">
    <property type="entry name" value="P450R"/>
    <property type="match status" value="1"/>
</dbReference>
<dbReference type="PRINTS" id="PR00369">
    <property type="entry name" value="FLAVODOXIN"/>
</dbReference>
<dbReference type="PRINTS" id="PR00371">
    <property type="entry name" value="FPNCR"/>
</dbReference>
<dbReference type="SUPFAM" id="SSF52343">
    <property type="entry name" value="Ferredoxin reductase-like, C-terminal NADP-linked domain"/>
    <property type="match status" value="1"/>
</dbReference>
<dbReference type="SUPFAM" id="SSF52218">
    <property type="entry name" value="Flavoproteins"/>
    <property type="match status" value="1"/>
</dbReference>
<dbReference type="SUPFAM" id="SSF63380">
    <property type="entry name" value="Riboflavin synthase domain-like"/>
    <property type="match status" value="1"/>
</dbReference>
<dbReference type="PROSITE" id="PS51384">
    <property type="entry name" value="FAD_FR"/>
    <property type="match status" value="1"/>
</dbReference>
<dbReference type="PROSITE" id="PS50902">
    <property type="entry name" value="FLAVODOXIN_LIKE"/>
    <property type="match status" value="1"/>
</dbReference>
<keyword id="KW-0002">3D-structure</keyword>
<keyword id="KW-0007">Acetylation</keyword>
<keyword id="KW-0256">Endoplasmic reticulum</keyword>
<keyword id="KW-0274">FAD</keyword>
<keyword id="KW-0285">Flavoprotein</keyword>
<keyword id="KW-0288">FMN</keyword>
<keyword id="KW-0472">Membrane</keyword>
<keyword id="KW-0521">NADP</keyword>
<keyword id="KW-0560">Oxidoreductase</keyword>
<keyword id="KW-1185">Reference proteome</keyword>
<keyword id="KW-0812">Transmembrane</keyword>
<keyword id="KW-1133">Transmembrane helix</keyword>
<name>NCPR_RAT</name>
<proteinExistence type="evidence at protein level"/>